<feature type="chain" id="PRO_0000155387" description="Probable thymidylate kinase">
    <location>
        <begin position="1"/>
        <end position="194"/>
    </location>
</feature>
<feature type="binding site" evidence="1">
    <location>
        <begin position="9"/>
        <end position="16"/>
    </location>
    <ligand>
        <name>ATP</name>
        <dbReference type="ChEBI" id="CHEBI:30616"/>
    </ligand>
</feature>
<proteinExistence type="inferred from homology"/>
<keyword id="KW-0067">ATP-binding</keyword>
<keyword id="KW-0418">Kinase</keyword>
<keyword id="KW-0545">Nucleotide biosynthesis</keyword>
<keyword id="KW-0547">Nucleotide-binding</keyword>
<keyword id="KW-1185">Reference proteome</keyword>
<keyword id="KW-0808">Transferase</keyword>
<comment type="catalytic activity">
    <reaction evidence="1">
        <text>dTMP + ATP = dTDP + ADP</text>
        <dbReference type="Rhea" id="RHEA:13517"/>
        <dbReference type="ChEBI" id="CHEBI:30616"/>
        <dbReference type="ChEBI" id="CHEBI:58369"/>
        <dbReference type="ChEBI" id="CHEBI:63528"/>
        <dbReference type="ChEBI" id="CHEBI:456216"/>
        <dbReference type="EC" id="2.7.4.9"/>
    </reaction>
</comment>
<comment type="similarity">
    <text evidence="1">Belongs to the thymidylate kinase family.</text>
</comment>
<name>KTHY_METKA</name>
<gene>
    <name evidence="1" type="primary">tmk</name>
    <name type="ordered locus">MK0101</name>
</gene>
<protein>
    <recommendedName>
        <fullName evidence="1">Probable thymidylate kinase</fullName>
        <ecNumber evidence="1">2.7.4.9</ecNumber>
    </recommendedName>
    <alternativeName>
        <fullName evidence="1">dTMP kinase</fullName>
    </alternativeName>
</protein>
<accession>Q8TZ38</accession>
<dbReference type="EC" id="2.7.4.9" evidence="1"/>
<dbReference type="EMBL" id="AE009439">
    <property type="protein sequence ID" value="AAM01318.1"/>
    <property type="molecule type" value="Genomic_DNA"/>
</dbReference>
<dbReference type="RefSeq" id="WP_011018473.1">
    <property type="nucleotide sequence ID" value="NC_003551.1"/>
</dbReference>
<dbReference type="SMR" id="Q8TZ38"/>
<dbReference type="FunCoup" id="Q8TZ38">
    <property type="interactions" value="138"/>
</dbReference>
<dbReference type="STRING" id="190192.MK0101"/>
<dbReference type="PaxDb" id="190192-MK0101"/>
<dbReference type="EnsemblBacteria" id="AAM01318">
    <property type="protein sequence ID" value="AAM01318"/>
    <property type="gene ID" value="MK0101"/>
</dbReference>
<dbReference type="GeneID" id="1477404"/>
<dbReference type="KEGG" id="mka:MK0101"/>
<dbReference type="HOGENOM" id="CLU_1399757_0_0_2"/>
<dbReference type="InParanoid" id="Q8TZ38"/>
<dbReference type="OrthoDB" id="43083at2157"/>
<dbReference type="Proteomes" id="UP000001826">
    <property type="component" value="Chromosome"/>
</dbReference>
<dbReference type="GO" id="GO:0005737">
    <property type="term" value="C:cytoplasm"/>
    <property type="evidence" value="ECO:0007669"/>
    <property type="project" value="TreeGrafter"/>
</dbReference>
<dbReference type="GO" id="GO:0005524">
    <property type="term" value="F:ATP binding"/>
    <property type="evidence" value="ECO:0007669"/>
    <property type="project" value="UniProtKB-UniRule"/>
</dbReference>
<dbReference type="GO" id="GO:0004798">
    <property type="term" value="F:dTMP kinase activity"/>
    <property type="evidence" value="ECO:0007669"/>
    <property type="project" value="UniProtKB-UniRule"/>
</dbReference>
<dbReference type="GO" id="GO:0006233">
    <property type="term" value="P:dTDP biosynthetic process"/>
    <property type="evidence" value="ECO:0007669"/>
    <property type="project" value="InterPro"/>
</dbReference>
<dbReference type="GO" id="GO:0006235">
    <property type="term" value="P:dTTP biosynthetic process"/>
    <property type="evidence" value="ECO:0007669"/>
    <property type="project" value="UniProtKB-UniRule"/>
</dbReference>
<dbReference type="GO" id="GO:0006227">
    <property type="term" value="P:dUDP biosynthetic process"/>
    <property type="evidence" value="ECO:0007669"/>
    <property type="project" value="TreeGrafter"/>
</dbReference>
<dbReference type="CDD" id="cd01672">
    <property type="entry name" value="TMPK"/>
    <property type="match status" value="1"/>
</dbReference>
<dbReference type="Gene3D" id="3.40.50.300">
    <property type="entry name" value="P-loop containing nucleotide triphosphate hydrolases"/>
    <property type="match status" value="1"/>
</dbReference>
<dbReference type="HAMAP" id="MF_00165">
    <property type="entry name" value="Thymidylate_kinase"/>
    <property type="match status" value="1"/>
</dbReference>
<dbReference type="InterPro" id="IPR027417">
    <property type="entry name" value="P-loop_NTPase"/>
</dbReference>
<dbReference type="InterPro" id="IPR039430">
    <property type="entry name" value="Thymidylate_kin-like_dom"/>
</dbReference>
<dbReference type="InterPro" id="IPR018094">
    <property type="entry name" value="Thymidylate_kinase"/>
</dbReference>
<dbReference type="PANTHER" id="PTHR10344">
    <property type="entry name" value="THYMIDYLATE KINASE"/>
    <property type="match status" value="1"/>
</dbReference>
<dbReference type="PANTHER" id="PTHR10344:SF4">
    <property type="entry name" value="UMP-CMP KINASE 2, MITOCHONDRIAL"/>
    <property type="match status" value="1"/>
</dbReference>
<dbReference type="Pfam" id="PF02223">
    <property type="entry name" value="Thymidylate_kin"/>
    <property type="match status" value="1"/>
</dbReference>
<dbReference type="SUPFAM" id="SSF52540">
    <property type="entry name" value="P-loop containing nucleoside triphosphate hydrolases"/>
    <property type="match status" value="1"/>
</dbReference>
<organism>
    <name type="scientific">Methanopyrus kandleri (strain AV19 / DSM 6324 / JCM 9639 / NBRC 100938)</name>
    <dbReference type="NCBI Taxonomy" id="190192"/>
    <lineage>
        <taxon>Archaea</taxon>
        <taxon>Methanobacteriati</taxon>
        <taxon>Methanobacteriota</taxon>
        <taxon>Methanomada group</taxon>
        <taxon>Methanopyri</taxon>
        <taxon>Methanopyrales</taxon>
        <taxon>Methanopyraceae</taxon>
        <taxon>Methanopyrus</taxon>
    </lineage>
</organism>
<evidence type="ECO:0000255" key="1">
    <source>
        <dbReference type="HAMAP-Rule" id="MF_00165"/>
    </source>
</evidence>
<reference key="1">
    <citation type="journal article" date="2002" name="Proc. Natl. Acad. Sci. U.S.A.">
        <title>The complete genome of hyperthermophile Methanopyrus kandleri AV19 and monophyly of archaeal methanogens.</title>
        <authorList>
            <person name="Slesarev A.I."/>
            <person name="Mezhevaya K.V."/>
            <person name="Makarova K.S."/>
            <person name="Polushin N.N."/>
            <person name="Shcherbinina O.V."/>
            <person name="Shakhova V.V."/>
            <person name="Belova G.I."/>
            <person name="Aravind L."/>
            <person name="Natale D.A."/>
            <person name="Rogozin I.B."/>
            <person name="Tatusov R.L."/>
            <person name="Wolf Y.I."/>
            <person name="Stetter K.O."/>
            <person name="Malykh A.G."/>
            <person name="Koonin E.V."/>
            <person name="Kozyavkin S.A."/>
        </authorList>
    </citation>
    <scope>NUCLEOTIDE SEQUENCE [LARGE SCALE GENOMIC DNA]</scope>
    <source>
        <strain>AV19 / DSM 6324 / JCM 9639 / NBRC 100938</strain>
    </source>
</reference>
<sequence length="194" mass="22113">MGLYLGVEGIDGVGKSSVVNLAAEFLEIHGLEVTTVREPSTDIGREALEWDDPYLQALAFTLDRMLTLKRVDFEAADVVLSDRTFLSTLAYQSALGADMRWLLELQRPVPKPDVVYIIDREPLAEDATFDKEFLERVRNRYREAARLIEEEFDVEIKWIEAEDMDKEEIAELIVADARRRLDDPLGIPDDLLEG</sequence>